<organism>
    <name type="scientific">Homo sapiens</name>
    <name type="common">Human</name>
    <dbReference type="NCBI Taxonomy" id="9606"/>
    <lineage>
        <taxon>Eukaryota</taxon>
        <taxon>Metazoa</taxon>
        <taxon>Chordata</taxon>
        <taxon>Craniata</taxon>
        <taxon>Vertebrata</taxon>
        <taxon>Euteleostomi</taxon>
        <taxon>Mammalia</taxon>
        <taxon>Eutheria</taxon>
        <taxon>Euarchontoglires</taxon>
        <taxon>Primates</taxon>
        <taxon>Haplorrhini</taxon>
        <taxon>Catarrhini</taxon>
        <taxon>Hominidae</taxon>
        <taxon>Homo</taxon>
    </lineage>
</organism>
<protein>
    <recommendedName>
        <fullName>Linker for activation of T-cells family member 1</fullName>
    </recommendedName>
    <alternativeName>
        <fullName>36 kDa phosphotyrosine adapter protein</fullName>
        <shortName>pp36</shortName>
    </alternativeName>
    <alternativeName>
        <fullName>p36-38</fullName>
    </alternativeName>
</protein>
<sequence>MEEAILVPCVLGLLLLPILAMLMALCVHCHRLPGSYDSTSSDSLYPRGIQFKRPHTVAPWPPAYPPVTSYPPLSQPDLLPIPRSPQPLGGSHRTPSSRRDSDGANSVASYENEGASGIRGAQAGWGVWGPSWTRLTPVSLPPEPACEDADEDEDDYHNPGYLVVLPDSTPATSTAAPSAPALSTPGIRDSAFSMESIDDYVNVPESGESAEASLDGSREYVNVSQELHPGAAKTEPAALSSQEAEEVEEEGAPDYENLQELN</sequence>
<comment type="function">
    <text evidence="5 9 10">Required for TCR (T-cell antigen receptor)- and pre-TCR-mediated signaling, both in mature T-cells and during their development (PubMed:23514740, PubMed:25907557). Involved in FCGR3 (low affinity immunoglobulin gamma Fc region receptor III)-mediated signaling in natural killer cells and FCER1 (high affinity immunoglobulin epsilon receptor)-mediated signaling in mast cells. Couples activation of these receptors and their associated kinases with distal intracellular events such as mobilization of intracellular calcium stores, PKC activation, MAPK activation or cytoskeletal reorganization through the recruitment of PLCG1, GRB2, GRAP2, and other signaling molecules.</text>
</comment>
<comment type="subunit">
    <text evidence="1 2">When phosphorylated, interacts directly with the PIK3R1 subunit of phosphoinositide 3-kinase and the SH2 domains of GRB2, GRAP, GRAP2, PLCG1 and PLCG2. Interacts indirectly with CBL, SOS, VAV, and LCP2. Interacts with SHB, SKAP2 and CLNK (By similarity). Interacts with FCGR1A. Interacts with GRB2, PLCG1 and THEMIS upon TCR activation in thymocytes (By similarity). Interacts with THEMIS2 (By similarity).</text>
</comment>
<comment type="subunit">
    <text evidence="10">(Microbial infection) Interacts with herpes virus 1/HHV-1 protein US3; this interaction prevents the interaction between LAT and TRAF6.</text>
</comment>
<comment type="interaction">
    <interactant intactId="EBI-1222766">
        <id>O43561</id>
    </interactant>
    <interactant intactId="EBI-297353">
        <id>P00533</id>
        <label>EGFR</label>
    </interactant>
    <organismsDiffer>false</organismsDiffer>
    <experiments>3</experiments>
</comment>
<comment type="interaction">
    <interactant intactId="EBI-1222766">
        <id>O43561</id>
    </interactant>
    <interactant intactId="EBI-401755">
        <id>P62993</id>
        <label>GRB2</label>
    </interactant>
    <organismsDiffer>false</organismsDiffer>
    <experiments>7</experiments>
</comment>
<comment type="interaction">
    <interactant intactId="EBI-1222766">
        <id>O43561</id>
    </interactant>
    <interactant intactId="EBI-1348">
        <id>P06239</id>
        <label>LCK</label>
    </interactant>
    <organismsDiffer>false</organismsDiffer>
    <experiments>2</experiments>
</comment>
<comment type="interaction">
    <interactant intactId="EBI-1222766">
        <id>O43561</id>
    </interactant>
    <interactant intactId="EBI-79464">
        <id>P27986</id>
        <label>PIK3R1</label>
    </interactant>
    <organismsDiffer>false</organismsDiffer>
    <experiments>4</experiments>
</comment>
<comment type="interaction">
    <interactant intactId="EBI-1222766">
        <id>O43561</id>
    </interactant>
    <interactant intactId="EBI-79387">
        <id>P19174</id>
        <label>PLCG1</label>
    </interactant>
    <organismsDiffer>false</organismsDiffer>
    <experiments>7</experiments>
</comment>
<comment type="interaction">
    <interactant intactId="EBI-1222766">
        <id>O43561</id>
    </interactant>
    <interactant intactId="EBI-968788">
        <id>P18031</id>
        <label>PTPN1</label>
    </interactant>
    <organismsDiffer>false</organismsDiffer>
    <experiments>3</experiments>
</comment>
<comment type="interaction">
    <interactant intactId="EBI-1222766">
        <id>O43561</id>
    </interactant>
    <interactant intactId="EBI-347996">
        <id>O43765</id>
        <label>SGTA</label>
    </interactant>
    <organismsDiffer>false</organismsDiffer>
    <experiments>3</experiments>
</comment>
<comment type="interaction">
    <interactant intactId="EBI-8070286">
        <id>O43561-2</id>
    </interactant>
    <interactant intactId="EBI-2606935">
        <id>Q96BI3</id>
        <label>APH1A</label>
    </interactant>
    <organismsDiffer>false</organismsDiffer>
    <experiments>3</experiments>
</comment>
<comment type="interaction">
    <interactant intactId="EBI-8070286">
        <id>O43561-2</id>
    </interactant>
    <interactant intactId="EBI-12808270">
        <id>P07307-3</id>
        <label>ASGR2</label>
    </interactant>
    <organismsDiffer>false</organismsDiffer>
    <experiments>3</experiments>
</comment>
<comment type="interaction">
    <interactant intactId="EBI-8070286">
        <id>O43561-2</id>
    </interactant>
    <interactant intactId="EBI-747430">
        <id>Q9BXK5</id>
        <label>BCL2L13</label>
    </interactant>
    <organismsDiffer>false</organismsDiffer>
    <experiments>3</experiments>
</comment>
<comment type="interaction">
    <interactant intactId="EBI-8070286">
        <id>O43561-2</id>
    </interactant>
    <interactant intactId="EBI-11532900">
        <id>J3KQ12</id>
        <label>BSCL2</label>
    </interactant>
    <organismsDiffer>false</organismsDiffer>
    <experiments>3</experiments>
</comment>
<comment type="interaction">
    <interactant intactId="EBI-8070286">
        <id>O43561-2</id>
    </interactant>
    <interactant intactId="EBI-1748958">
        <id>P49069</id>
        <label>CAMLG</label>
    </interactant>
    <organismsDiffer>false</organismsDiffer>
    <experiments>3</experiments>
</comment>
<comment type="interaction">
    <interactant intactId="EBI-8070286">
        <id>O43561-2</id>
    </interactant>
    <interactant intactId="EBI-3862428">
        <id>P09693</id>
        <label>CD3G</label>
    </interactant>
    <organismsDiffer>false</organismsDiffer>
    <experiments>3</experiments>
</comment>
<comment type="interaction">
    <interactant intactId="EBI-8070286">
        <id>O43561-2</id>
    </interactant>
    <interactant intactId="EBI-6657396">
        <id>P19397</id>
        <label>CD53</label>
    </interactant>
    <organismsDiffer>false</organismsDiffer>
    <experiments>3</experiments>
</comment>
<comment type="interaction">
    <interactant intactId="EBI-8070286">
        <id>O43561-2</id>
    </interactant>
    <interactant intactId="EBI-2876678">
        <id>Q9H305</id>
        <label>CDIP1</label>
    </interactant>
    <organismsDiffer>false</organismsDiffer>
    <experiments>3</experiments>
</comment>
<comment type="interaction">
    <interactant intactId="EBI-8070286">
        <id>O43561-2</id>
    </interactant>
    <interactant intactId="EBI-751440">
        <id>P57739</id>
        <label>CLDN2</label>
    </interactant>
    <organismsDiffer>false</organismsDiffer>
    <experiments>3</experiments>
</comment>
<comment type="interaction">
    <interactant intactId="EBI-8070286">
        <id>O43561-2</id>
    </interactant>
    <interactant intactId="EBI-18400628">
        <id>O00501</id>
        <label>CLDN5</label>
    </interactant>
    <organismsDiffer>false</organismsDiffer>
    <experiments>3</experiments>
</comment>
<comment type="interaction">
    <interactant intactId="EBI-8070286">
        <id>O43561-2</id>
    </interactant>
    <interactant intactId="EBI-740744">
        <id>O95471</id>
        <label>CLDN7</label>
    </interactant>
    <organismsDiffer>false</organismsDiffer>
    <experiments>3</experiments>
</comment>
<comment type="interaction">
    <interactant intactId="EBI-8070286">
        <id>O43561-2</id>
    </interactant>
    <interactant intactId="EBI-12823659">
        <id>Q5JRM2</id>
        <label>CXorf66</label>
    </interactant>
    <organismsDiffer>false</organismsDiffer>
    <experiments>3</experiments>
</comment>
<comment type="interaction">
    <interactant intactId="EBI-8070286">
        <id>O43561-2</id>
    </interactant>
    <interactant intactId="EBI-2680384">
        <id>Q9BQA9</id>
        <label>CYBC1</label>
    </interactant>
    <organismsDiffer>false</organismsDiffer>
    <experiments>3</experiments>
</comment>
<comment type="interaction">
    <interactant intactId="EBI-8070286">
        <id>O43561-2</id>
    </interactant>
    <interactant intactId="EBI-2833872">
        <id>O15552</id>
        <label>FFAR2</label>
    </interactant>
    <organismsDiffer>false</organismsDiffer>
    <experiments>3</experiments>
</comment>
<comment type="interaction">
    <interactant intactId="EBI-8070286">
        <id>O43561-2</id>
    </interactant>
    <interactant intactId="EBI-17762181">
        <id>O14843</id>
        <label>FFAR3</label>
    </interactant>
    <organismsDiffer>false</organismsDiffer>
    <experiments>3</experiments>
</comment>
<comment type="interaction">
    <interactant intactId="EBI-8070286">
        <id>O43561-2</id>
    </interactant>
    <interactant intactId="EBI-3918971">
        <id>Q9Y680</id>
        <label>FKBP7</label>
    </interactant>
    <organismsDiffer>false</organismsDiffer>
    <experiments>3</experiments>
</comment>
<comment type="interaction">
    <interactant intactId="EBI-8070286">
        <id>O43561-2</id>
    </interactant>
    <interactant intactId="EBI-17458373">
        <id>P48165</id>
        <label>GJA8</label>
    </interactant>
    <organismsDiffer>false</organismsDiffer>
    <experiments>3</experiments>
</comment>
<comment type="interaction">
    <interactant intactId="EBI-8070286">
        <id>O43561-2</id>
    </interactant>
    <interactant intactId="EBI-17565645">
        <id>P08034</id>
        <label>GJB1</label>
    </interactant>
    <organismsDiffer>false</organismsDiffer>
    <experiments>3</experiments>
</comment>
<comment type="interaction">
    <interactant intactId="EBI-8070286">
        <id>O43561-2</id>
    </interactant>
    <interactant intactId="EBI-3908586">
        <id>O75712</id>
        <label>GJB3</label>
    </interactant>
    <organismsDiffer>false</organismsDiffer>
    <experiments>3</experiments>
</comment>
<comment type="interaction">
    <interactant intactId="EBI-8070286">
        <id>O43561-2</id>
    </interactant>
    <interactant intactId="EBI-712073">
        <id>Q8NBJ4</id>
        <label>GOLM1</label>
    </interactant>
    <organismsDiffer>false</organismsDiffer>
    <experiments>3</experiments>
</comment>
<comment type="interaction">
    <interactant intactId="EBI-8070286">
        <id>O43561-2</id>
    </interactant>
    <interactant intactId="EBI-17935713">
        <id>Q96P66</id>
        <label>GPR101</label>
    </interactant>
    <organismsDiffer>false</organismsDiffer>
    <experiments>3</experiments>
</comment>
<comment type="interaction">
    <interactant intactId="EBI-8070286">
        <id>O43561-2</id>
    </interactant>
    <interactant intactId="EBI-11955647">
        <id>Q8TDV0</id>
        <label>GPR151</label>
    </interactant>
    <organismsDiffer>false</organismsDiffer>
    <experiments>3</experiments>
</comment>
<comment type="interaction">
    <interactant intactId="EBI-8070286">
        <id>O43561-2</id>
    </interactant>
    <interactant intactId="EBI-13345167">
        <id>Q8TDT2</id>
        <label>GPR152</label>
    </interactant>
    <organismsDiffer>false</organismsDiffer>
    <experiments>3</experiments>
</comment>
<comment type="interaction">
    <interactant intactId="EBI-8070286">
        <id>O43561-2</id>
    </interactant>
    <interactant intactId="EBI-18076404">
        <id>O15529</id>
        <label>GPR42</label>
    </interactant>
    <organismsDiffer>false</organismsDiffer>
    <experiments>3</experiments>
</comment>
<comment type="interaction">
    <interactant intactId="EBI-8070286">
        <id>O43561-2</id>
    </interactant>
    <interactant intactId="EBI-15787932">
        <id>P62993-1</id>
        <label>GRB2</label>
    </interactant>
    <organismsDiffer>false</organismsDiffer>
    <experiments>3</experiments>
</comment>
<comment type="interaction">
    <interactant intactId="EBI-8070286">
        <id>O43561-2</id>
    </interactant>
    <interactant intactId="EBI-11305455">
        <id>Q96MG2</id>
        <label>JSRP1</label>
    </interactant>
    <organismsDiffer>false</organismsDiffer>
    <experiments>3</experiments>
</comment>
<comment type="interaction">
    <interactant intactId="EBI-8070286">
        <id>O43561-2</id>
    </interactant>
    <interactant intactId="EBI-743960">
        <id>Q8N5Z5</id>
        <label>KCTD17</label>
    </interactant>
    <organismsDiffer>false</organismsDiffer>
    <experiments>3</experiments>
</comment>
<comment type="interaction">
    <interactant intactId="EBI-8070286">
        <id>O43561-2</id>
    </interactant>
    <interactant intactId="EBI-8632435">
        <id>P43628</id>
        <label>KIR2DL3</label>
    </interactant>
    <organismsDiffer>false</organismsDiffer>
    <experiments>3</experiments>
</comment>
<comment type="interaction">
    <interactant intactId="EBI-8070286">
        <id>O43561-2</id>
    </interactant>
    <interactant intactId="EBI-17490413">
        <id>A8MZ59</id>
        <label>LEUTX</label>
    </interactant>
    <organismsDiffer>false</organismsDiffer>
    <experiments>3</experiments>
</comment>
<comment type="interaction">
    <interactant intactId="EBI-8070286">
        <id>O43561-2</id>
    </interactant>
    <interactant intactId="EBI-18268016">
        <id>Q86WI0</id>
        <label>LHFPL1</label>
    </interactant>
    <organismsDiffer>false</organismsDiffer>
    <experiments>3</experiments>
</comment>
<comment type="interaction">
    <interactant intactId="EBI-8070286">
        <id>O43561-2</id>
    </interactant>
    <interactant intactId="EBI-2820517">
        <id>Q8TAF8</id>
        <label>LHFPL5</label>
    </interactant>
    <organismsDiffer>false</organismsDiffer>
    <experiments>3</experiments>
</comment>
<comment type="interaction">
    <interactant intactId="EBI-8070286">
        <id>O43561-2</id>
    </interactant>
    <interactant intactId="EBI-2603996">
        <id>Q9BXW4</id>
        <label>MAP1LC3C</label>
    </interactant>
    <organismsDiffer>false</organismsDiffer>
    <experiments>3</experiments>
</comment>
<comment type="interaction">
    <interactant intactId="EBI-8070286">
        <id>O43561-2</id>
    </interactant>
    <interactant intactId="EBI-16439278">
        <id>Q6FHY5</id>
        <label>MEOX2</label>
    </interactant>
    <organismsDiffer>false</organismsDiffer>
    <experiments>3</experiments>
</comment>
<comment type="interaction">
    <interactant intactId="EBI-8070286">
        <id>O43561-2</id>
    </interactant>
    <interactant intactId="EBI-11956541">
        <id>Q9GZY8-5</id>
        <label>MFF</label>
    </interactant>
    <organismsDiffer>false</organismsDiffer>
    <experiments>3</experiments>
</comment>
<comment type="interaction">
    <interactant intactId="EBI-8070286">
        <id>O43561-2</id>
    </interactant>
    <interactant intactId="EBI-373355">
        <id>Q5SR56</id>
        <label>MFSD14B</label>
    </interactant>
    <organismsDiffer>false</organismsDiffer>
    <experiments>3</experiments>
</comment>
<comment type="interaction">
    <interactant intactId="EBI-8070286">
        <id>O43561-2</id>
    </interactant>
    <interactant intactId="EBI-3920969">
        <id>Q6N075</id>
        <label>MFSD5</label>
    </interactant>
    <organismsDiffer>false</organismsDiffer>
    <experiments>3</experiments>
</comment>
<comment type="interaction">
    <interactant intactId="EBI-8070286">
        <id>O43561-2</id>
    </interactant>
    <interactant intactId="EBI-750085">
        <id>Q9Y676</id>
        <label>MRPS18B</label>
    </interactant>
    <organismsDiffer>false</organismsDiffer>
    <experiments>3</experiments>
</comment>
<comment type="interaction">
    <interactant intactId="EBI-8070286">
        <id>O43561-2</id>
    </interactant>
    <interactant intactId="EBI-721391">
        <id>Q9GZW8</id>
        <label>MS4A7</label>
    </interactant>
    <organismsDiffer>false</organismsDiffer>
    <experiments>3</experiments>
</comment>
<comment type="interaction">
    <interactant intactId="EBI-8070286">
        <id>O43561-2</id>
    </interactant>
    <interactant intactId="EBI-3923617">
        <id>Q9H2K0</id>
        <label>MTIF3</label>
    </interactant>
    <organismsDiffer>false</organismsDiffer>
    <experiments>3</experiments>
</comment>
<comment type="interaction">
    <interactant intactId="EBI-8070286">
        <id>O43561-2</id>
    </interactant>
    <interactant intactId="EBI-2682365">
        <id>Q8N183</id>
        <label>NDUFAF2</label>
    </interactant>
    <organismsDiffer>false</organismsDiffer>
    <experiments>3</experiments>
</comment>
<comment type="interaction">
    <interactant intactId="EBI-8070286">
        <id>O43561-2</id>
    </interactant>
    <interactant intactId="EBI-12807478">
        <id>P35372-10</id>
        <label>OPRM1</label>
    </interactant>
    <organismsDiffer>false</organismsDiffer>
    <experiments>3</experiments>
</comment>
<comment type="interaction">
    <interactant intactId="EBI-8070286">
        <id>O43561-2</id>
    </interactant>
    <interactant intactId="EBI-738624">
        <id>Q16378</id>
        <label>PRR4</label>
    </interactant>
    <organismsDiffer>false</organismsDiffer>
    <experiments>3</experiments>
</comment>
<comment type="interaction">
    <interactant intactId="EBI-8070286">
        <id>O43561-2</id>
    </interactant>
    <interactant intactId="EBI-3920694">
        <id>Q9NR31</id>
        <label>SAR1A</label>
    </interactant>
    <organismsDiffer>false</organismsDiffer>
    <experiments>3</experiments>
</comment>
<comment type="interaction">
    <interactant intactId="EBI-8070286">
        <id>O43561-2</id>
    </interactant>
    <interactant intactId="EBI-347996">
        <id>O43765</id>
        <label>SGTA</label>
    </interactant>
    <organismsDiffer>false</organismsDiffer>
    <experiments>3</experiments>
</comment>
<comment type="interaction">
    <interactant intactId="EBI-8070286">
        <id>O43561-2</id>
    </interactant>
    <interactant intactId="EBI-744081">
        <id>Q96EQ0</id>
        <label>SGTB</label>
    </interactant>
    <organismsDiffer>false</organismsDiffer>
    <experiments>3</experiments>
</comment>
<comment type="interaction">
    <interactant intactId="EBI-8070286">
        <id>O43561-2</id>
    </interactant>
    <interactant intactId="EBI-1573290">
        <id>Q15849</id>
        <label>SLC14A2</label>
    </interactant>
    <organismsDiffer>false</organismsDiffer>
    <experiments>3</experiments>
</comment>
<comment type="interaction">
    <interactant intactId="EBI-8070286">
        <id>O43561-2</id>
    </interactant>
    <interactant intactId="EBI-17595455">
        <id>P54219-3</id>
        <label>SLC18A1</label>
    </interactant>
    <organismsDiffer>false</organismsDiffer>
    <experiments>3</experiments>
</comment>
<comment type="interaction">
    <interactant intactId="EBI-8070286">
        <id>O43561-2</id>
    </interactant>
    <interactant intactId="EBI-3923779">
        <id>Q9BZV2</id>
        <label>SLC19A3</label>
    </interactant>
    <organismsDiffer>false</organismsDiffer>
    <experiments>3</experiments>
</comment>
<comment type="interaction">
    <interactant intactId="EBI-8070286">
        <id>O43561-2</id>
    </interactant>
    <interactant intactId="EBI-12814225">
        <id>Q9BXS9-3</id>
        <label>SLC26A6</label>
    </interactant>
    <organismsDiffer>false</organismsDiffer>
    <experiments>3</experiments>
</comment>
<comment type="interaction">
    <interactant intactId="EBI-8070286">
        <id>O43561-2</id>
    </interactant>
    <interactant intactId="EBI-17295964">
        <id>Q9NQQ7-3</id>
        <label>SLC35C2</label>
    </interactant>
    <organismsDiffer>false</organismsDiffer>
    <experiments>3</experiments>
</comment>
<comment type="interaction">
    <interactant intactId="EBI-8070286">
        <id>O43561-2</id>
    </interactant>
    <interactant intactId="EBI-12266756">
        <id>Q86UW2</id>
        <label>SLC51B</label>
    </interactant>
    <organismsDiffer>false</organismsDiffer>
    <experiments>5</experiments>
</comment>
<comment type="interaction">
    <interactant intactId="EBI-8070286">
        <id>O43561-2</id>
    </interactant>
    <interactant intactId="EBI-355293">
        <id>P03973</id>
        <label>SLPI</label>
    </interactant>
    <organismsDiffer>false</organismsDiffer>
    <experiments>3</experiments>
</comment>
<comment type="interaction">
    <interactant intactId="EBI-8070286">
        <id>O43561-2</id>
    </interactant>
    <interactant intactId="EBI-17280858">
        <id>Q8WWF3</id>
        <label>SSMEM1</label>
    </interactant>
    <organismsDiffer>false</organismsDiffer>
    <experiments>3</experiments>
</comment>
<comment type="interaction">
    <interactant intactId="EBI-8070286">
        <id>O43561-2</id>
    </interactant>
    <interactant intactId="EBI-8032987">
        <id>Q8N9I0</id>
        <label>SYT2</label>
    </interactant>
    <organismsDiffer>false</organismsDiffer>
    <experiments>3</experiments>
</comment>
<comment type="interaction">
    <interactant intactId="EBI-8070286">
        <id>O43561-2</id>
    </interactant>
    <interactant intactId="EBI-726691">
        <id>Q8WY91</id>
        <label>THAP4</label>
    </interactant>
    <organismsDiffer>false</organismsDiffer>
    <experiments>3</experiments>
</comment>
<comment type="interaction">
    <interactant intactId="EBI-8070286">
        <id>O43561-2</id>
    </interactant>
    <interactant intactId="EBI-13351685">
        <id>Q96CE8</id>
        <label>TM4SF18</label>
    </interactant>
    <organismsDiffer>false</organismsDiffer>
    <experiments>3</experiments>
</comment>
<comment type="interaction">
    <interactant intactId="EBI-8070286">
        <id>O43561-2</id>
    </interactant>
    <interactant intactId="EBI-10982110">
        <id>Q96Q45-2</id>
        <label>TMEM237</label>
    </interactant>
    <organismsDiffer>false</organismsDiffer>
    <experiments>3</experiments>
</comment>
<comment type="interaction">
    <interactant intactId="EBI-8070286">
        <id>O43561-2</id>
    </interactant>
    <interactant intactId="EBI-3923061">
        <id>Q96B21</id>
        <label>TMEM45B</label>
    </interactant>
    <organismsDiffer>false</organismsDiffer>
    <experiments>3</experiments>
</comment>
<comment type="interaction">
    <interactant intactId="EBI-8070286">
        <id>O43561-2</id>
    </interactant>
    <interactant intactId="EBI-11742770">
        <id>Q96HE8</id>
        <label>TMEM80</label>
    </interactant>
    <organismsDiffer>false</organismsDiffer>
    <experiments>3</experiments>
</comment>
<comment type="interaction">
    <interactant intactId="EBI-8070286">
        <id>O43561-2</id>
    </interactant>
    <interactant intactId="EBI-1044859">
        <id>Q9UBN6</id>
        <label>TNFRSF10D</label>
    </interactant>
    <organismsDiffer>false</organismsDiffer>
    <experiments>3</experiments>
</comment>
<comment type="interaction">
    <interactant intactId="EBI-8070286">
        <id>O43561-2</id>
    </interactant>
    <interactant intactId="EBI-12948063">
        <id>Q9NXF8-2</id>
        <label>ZDHHC7</label>
    </interactant>
    <organismsDiffer>false</organismsDiffer>
    <experiments>3</experiments>
</comment>
<comment type="interaction">
    <interactant intactId="EBI-8070286">
        <id>O43561-2</id>
    </interactant>
    <interactant intactId="EBI-8013886">
        <id>P08487</id>
        <label>PLCG1</label>
    </interactant>
    <organismsDiffer>true</organismsDiffer>
    <experiments>4</experiments>
</comment>
<comment type="subcellular location">
    <subcellularLocation>
        <location evidence="13 14">Cell membrane</location>
        <topology evidence="13 14">Single-pass type III membrane protein</topology>
    </subcellularLocation>
    <text>Present in lipid rafts.</text>
</comment>
<comment type="alternative products">
    <event type="alternative splicing"/>
    <isoform>
        <id>O43561-1</id>
        <name>1</name>
        <name>Long</name>
        <sequence type="displayed"/>
    </isoform>
    <isoform>
        <id>O43561-2</id>
        <name>2</name>
        <name>Short</name>
        <sequence type="described" ref="VSP_004303"/>
    </isoform>
    <isoform>
        <id>O43561-3</id>
        <name>3</name>
        <sequence type="described" ref="VSP_054758 VSP_004303"/>
    </isoform>
    <isoform>
        <id>O43561-4</id>
        <name>4</name>
        <sequence type="described" ref="VSP_054759 VSP_004303"/>
    </isoform>
    <isoform>
        <id>O43561-5</id>
        <name>5</name>
        <sequence type="described" ref="VSP_054759"/>
    </isoform>
</comment>
<comment type="tissue specificity">
    <text evidence="8 13">Expressed in thymus, T-cells, NK cells, mast cells and, at lower levels, in spleen. Present in T-cells but not B-cells (at protein level).</text>
</comment>
<comment type="PTM">
    <text>Phosphorylated on tyrosines by ZAP70 upon TCR activation, or by SYK upon other immunoreceptor activation; which leads to the recruitment of multiple signaling molecules. Is one of the most prominently tyrosine-phosphorylated proteins detected following TCR engagement. May be dephosphorylated by PTPRJ. Phosphorylated by ITK leading to the recruitment of VAV1 to LAT-containing complexes.</text>
</comment>
<comment type="PTM">
    <text evidence="14">Palmitoylation of Cys-26 and Cys-29 is required for raft targeting and efficient phosphorylation.</text>
</comment>
<comment type="PTM">
    <text evidence="9 10">'Lys-63'-linked ubiquitinated by TRAF6.</text>
</comment>
<comment type="disease" evidence="11 12">
    <disease id="DI-05013">
        <name>Immunodeficiency 52</name>
        <acronym>IMD52</acronym>
        <description>An autosomal recessive primary immunodeficiency characterized by T-cell abnormalities, resulting in severe combined immunodeficiency, autoimmune disease, progressive lymphopenia and hypogammaglobulinemia, and lymphoproliferation with splenomegaly. Patients develop severe recurrent infections from infancy.</description>
        <dbReference type="MIM" id="617514"/>
    </disease>
    <text>The disease is caused by variants affecting the gene represented in this entry.</text>
</comment>
<comment type="miscellaneous">
    <text>Engagement of killer inhibitory receptors (KIR) disrupts the interaction of PLCG1 with LAT and blocks target cell-induced activation of PLC, maybe by inducing the dephosphorylation of LAT.</text>
</comment>
<accession>O43561</accession>
<accession>B7WPI0</accession>
<accession>C7C5T6</accession>
<accession>G5E9K3</accession>
<accession>O43919</accession>
<keyword id="KW-1064">Adaptive immunity</keyword>
<keyword id="KW-0025">Alternative splicing</keyword>
<keyword id="KW-1003">Cell membrane</keyword>
<keyword id="KW-0903">Direct protein sequencing</keyword>
<keyword id="KW-0391">Immunity</keyword>
<keyword id="KW-0449">Lipoprotein</keyword>
<keyword id="KW-0467">Mast cell degranulation</keyword>
<keyword id="KW-0472">Membrane</keyword>
<keyword id="KW-0564">Palmitate</keyword>
<keyword id="KW-0597">Phosphoprotein</keyword>
<keyword id="KW-1267">Proteomics identification</keyword>
<keyword id="KW-1185">Reference proteome</keyword>
<keyword id="KW-0735">Signal-anchor</keyword>
<keyword id="KW-0812">Transmembrane</keyword>
<keyword id="KW-1133">Transmembrane helix</keyword>
<keyword id="KW-0832">Ubl conjugation</keyword>
<proteinExistence type="evidence at protein level"/>
<evidence type="ECO:0000250" key="1"/>
<evidence type="ECO:0000250" key="2">
    <source>
        <dbReference type="UniProtKB" id="O54957"/>
    </source>
</evidence>
<evidence type="ECO:0000255" key="3"/>
<evidence type="ECO:0000256" key="4">
    <source>
        <dbReference type="SAM" id="MobiDB-lite"/>
    </source>
</evidence>
<evidence type="ECO:0000269" key="5">
    <source>
    </source>
</evidence>
<evidence type="ECO:0000269" key="6">
    <source>
    </source>
</evidence>
<evidence type="ECO:0000269" key="7">
    <source>
    </source>
</evidence>
<evidence type="ECO:0000269" key="8">
    <source>
    </source>
</evidence>
<evidence type="ECO:0000269" key="9">
    <source>
    </source>
</evidence>
<evidence type="ECO:0000269" key="10">
    <source>
    </source>
</evidence>
<evidence type="ECO:0000269" key="11">
    <source>
    </source>
</evidence>
<evidence type="ECO:0000269" key="12">
    <source>
    </source>
</evidence>
<evidence type="ECO:0000269" key="13">
    <source>
    </source>
</evidence>
<evidence type="ECO:0000269" key="14">
    <source>
    </source>
</evidence>
<evidence type="ECO:0000303" key="15">
    <source>
    </source>
</evidence>
<evidence type="ECO:0000303" key="16">
    <source>
    </source>
</evidence>
<evidence type="ECO:0000303" key="17">
    <source>
    </source>
</evidence>
<evidence type="ECO:0000303" key="18">
    <source ref="3"/>
</evidence>
<evidence type="ECO:0000305" key="19"/>
<evidence type="ECO:0007744" key="20">
    <source>
    </source>
</evidence>
<evidence type="ECO:0007744" key="21">
    <source>
    </source>
</evidence>
<gene>
    <name type="primary">LAT</name>
</gene>
<reference key="1">
    <citation type="journal article" date="1998" name="Cell">
        <title>LAT: the ZAP-70 tyrosine kinase substrate that links T cell receptor to cellular activation.</title>
        <authorList>
            <person name="Zhang W."/>
            <person name="Sloan-Lancaster J."/>
            <person name="Kitchen J."/>
            <person name="Trible R.P."/>
            <person name="Samelson L.E."/>
        </authorList>
    </citation>
    <scope>NUCLEOTIDE SEQUENCE [MRNA] (ISOFORMS 1 AND 2)</scope>
    <scope>PROTEIN SEQUENCE OF 32-47 AND 219-233</scope>
    <scope>PHOSPHORYLATION AT TYR-200</scope>
    <scope>IDENTIFICATION BY MASS SPECTROMETRY</scope>
    <scope>MUTAGENESIS OF TYR-200 AND TYR-220</scope>
    <scope>TISSUE SPECIFICITY</scope>
    <scope>SUBCELLULAR LOCATION</scope>
    <scope>INTERACTION WITH PIK3R1; GRB2; GRAP AND PLCG1</scope>
    <source>
        <tissue>Leukemia</tissue>
    </source>
</reference>
<reference key="2">
    <citation type="journal article" date="1998" name="J. Exp. Med.">
        <title>Molecular cloning of the cDNA encoding pp36, a tyrosine-phosphorylated adaptor protein selectively expressed by T cells and natural killer cells.</title>
        <authorList>
            <person name="Weber J.R."/>
            <person name="Orstavik S."/>
            <person name="Torgersen K.M."/>
            <person name="Danbolt N.C."/>
            <person name="Berg S.F."/>
            <person name="Ryan J.C."/>
            <person name="Tasken K."/>
            <person name="Imboden J.B."/>
            <person name="Vaage J.T."/>
        </authorList>
    </citation>
    <scope>NUCLEOTIDE SEQUENCE [MRNA] (ISOFORM 2)</scope>
    <source>
        <tissue>Thymus</tissue>
    </source>
</reference>
<reference key="3">
    <citation type="submission" date="2009-07" db="EMBL/GenBank/DDBJ databases">
        <title>Inactivation of pre-B cell receptor-mediated tumor suppression by aberrant splicing in Ph+ acute lymphoblastic leukemia.</title>
        <authorList>
            <person name="Muschen M."/>
        </authorList>
    </citation>
    <scope>NUCLEOTIDE SEQUENCE [MRNA] (ISOFORM 5)</scope>
    <source>
        <tissue>Bone marrow</tissue>
    </source>
</reference>
<reference key="4">
    <citation type="journal article" date="2004" name="Nature">
        <title>The sequence and analysis of duplication-rich human chromosome 16.</title>
        <authorList>
            <person name="Martin J."/>
            <person name="Han C."/>
            <person name="Gordon L.A."/>
            <person name="Terry A."/>
            <person name="Prabhakar S."/>
            <person name="She X."/>
            <person name="Xie G."/>
            <person name="Hellsten U."/>
            <person name="Chan Y.M."/>
            <person name="Altherr M."/>
            <person name="Couronne O."/>
            <person name="Aerts A."/>
            <person name="Bajorek E."/>
            <person name="Black S."/>
            <person name="Blumer H."/>
            <person name="Branscomb E."/>
            <person name="Brown N.C."/>
            <person name="Bruno W.J."/>
            <person name="Buckingham J.M."/>
            <person name="Callen D.F."/>
            <person name="Campbell C.S."/>
            <person name="Campbell M.L."/>
            <person name="Campbell E.W."/>
            <person name="Caoile C."/>
            <person name="Challacombe J.F."/>
            <person name="Chasteen L.A."/>
            <person name="Chertkov O."/>
            <person name="Chi H.C."/>
            <person name="Christensen M."/>
            <person name="Clark L.M."/>
            <person name="Cohn J.D."/>
            <person name="Denys M."/>
            <person name="Detter J.C."/>
            <person name="Dickson M."/>
            <person name="Dimitrijevic-Bussod M."/>
            <person name="Escobar J."/>
            <person name="Fawcett J.J."/>
            <person name="Flowers D."/>
            <person name="Fotopulos D."/>
            <person name="Glavina T."/>
            <person name="Gomez M."/>
            <person name="Gonzales E."/>
            <person name="Goodstein D."/>
            <person name="Goodwin L.A."/>
            <person name="Grady D.L."/>
            <person name="Grigoriev I."/>
            <person name="Groza M."/>
            <person name="Hammon N."/>
            <person name="Hawkins T."/>
            <person name="Haydu L."/>
            <person name="Hildebrand C.E."/>
            <person name="Huang W."/>
            <person name="Israni S."/>
            <person name="Jett J."/>
            <person name="Jewett P.B."/>
            <person name="Kadner K."/>
            <person name="Kimball H."/>
            <person name="Kobayashi A."/>
            <person name="Krawczyk M.-C."/>
            <person name="Leyba T."/>
            <person name="Longmire J.L."/>
            <person name="Lopez F."/>
            <person name="Lou Y."/>
            <person name="Lowry S."/>
            <person name="Ludeman T."/>
            <person name="Manohar C.F."/>
            <person name="Mark G.A."/>
            <person name="McMurray K.L."/>
            <person name="Meincke L.J."/>
            <person name="Morgan J."/>
            <person name="Moyzis R.K."/>
            <person name="Mundt M.O."/>
            <person name="Munk A.C."/>
            <person name="Nandkeshwar R.D."/>
            <person name="Pitluck S."/>
            <person name="Pollard M."/>
            <person name="Predki P."/>
            <person name="Parson-Quintana B."/>
            <person name="Ramirez L."/>
            <person name="Rash S."/>
            <person name="Retterer J."/>
            <person name="Ricke D.O."/>
            <person name="Robinson D.L."/>
            <person name="Rodriguez A."/>
            <person name="Salamov A."/>
            <person name="Saunders E.H."/>
            <person name="Scott D."/>
            <person name="Shough T."/>
            <person name="Stallings R.L."/>
            <person name="Stalvey M."/>
            <person name="Sutherland R.D."/>
            <person name="Tapia R."/>
            <person name="Tesmer J.G."/>
            <person name="Thayer N."/>
            <person name="Thompson L.S."/>
            <person name="Tice H."/>
            <person name="Torney D.C."/>
            <person name="Tran-Gyamfi M."/>
            <person name="Tsai M."/>
            <person name="Ulanovsky L.E."/>
            <person name="Ustaszewska A."/>
            <person name="Vo N."/>
            <person name="White P.S."/>
            <person name="Williams A.L."/>
            <person name="Wills P.L."/>
            <person name="Wu J.-R."/>
            <person name="Wu K."/>
            <person name="Yang J."/>
            <person name="DeJong P."/>
            <person name="Bruce D."/>
            <person name="Doggett N.A."/>
            <person name="Deaven L."/>
            <person name="Schmutz J."/>
            <person name="Grimwood J."/>
            <person name="Richardson P."/>
            <person name="Rokhsar D.S."/>
            <person name="Eichler E.E."/>
            <person name="Gilna P."/>
            <person name="Lucas S.M."/>
            <person name="Myers R.M."/>
            <person name="Rubin E.M."/>
            <person name="Pennacchio L.A."/>
        </authorList>
    </citation>
    <scope>NUCLEOTIDE SEQUENCE [LARGE SCALE GENOMIC DNA]</scope>
</reference>
<reference key="5">
    <citation type="submission" date="2005-07" db="EMBL/GenBank/DDBJ databases">
        <authorList>
            <person name="Mural R.J."/>
            <person name="Istrail S."/>
            <person name="Sutton G.G."/>
            <person name="Florea L."/>
            <person name="Halpern A.L."/>
            <person name="Mobarry C.M."/>
            <person name="Lippert R."/>
            <person name="Walenz B."/>
            <person name="Shatkay H."/>
            <person name="Dew I."/>
            <person name="Miller J.R."/>
            <person name="Flanigan M.J."/>
            <person name="Edwards N.J."/>
            <person name="Bolanos R."/>
            <person name="Fasulo D."/>
            <person name="Halldorsson B.V."/>
            <person name="Hannenhalli S."/>
            <person name="Turner R."/>
            <person name="Yooseph S."/>
            <person name="Lu F."/>
            <person name="Nusskern D.R."/>
            <person name="Shue B.C."/>
            <person name="Zheng X.H."/>
            <person name="Zhong F."/>
            <person name="Delcher A.L."/>
            <person name="Huson D.H."/>
            <person name="Kravitz S.A."/>
            <person name="Mouchard L."/>
            <person name="Reinert K."/>
            <person name="Remington K.A."/>
            <person name="Clark A.G."/>
            <person name="Waterman M.S."/>
            <person name="Eichler E.E."/>
            <person name="Adams M.D."/>
            <person name="Hunkapiller M.W."/>
            <person name="Myers E.W."/>
            <person name="Venter J.C."/>
        </authorList>
    </citation>
    <scope>NUCLEOTIDE SEQUENCE [LARGE SCALE GENOMIC DNA]</scope>
</reference>
<reference key="6">
    <citation type="journal article" date="2004" name="Genome Res.">
        <title>The status, quality, and expansion of the NIH full-length cDNA project: the Mammalian Gene Collection (MGC).</title>
        <authorList>
            <consortium name="The MGC Project Team"/>
        </authorList>
    </citation>
    <scope>NUCLEOTIDE SEQUENCE [LARGE SCALE MRNA] (ISOFORM 2)</scope>
    <source>
        <tissue>Colon</tissue>
    </source>
</reference>
<reference key="7">
    <citation type="journal article" date="1998" name="Immunity">
        <title>LAT palmitoylation: its essential role in membrane microdomain targeting and tyrosine phosphorylation during T cell activation.</title>
        <authorList>
            <person name="Zhang W."/>
            <person name="Trible R.P."/>
            <person name="Samelson L.E."/>
        </authorList>
    </citation>
    <scope>SUBCELLULAR LOCATION</scope>
    <scope>PALMITOYLATION AT CYS-26 AND CYS-29</scope>
    <scope>MUTAGENESIS OF CYS-26 AND CYS-29</scope>
</reference>
<reference key="8">
    <citation type="journal article" date="1999" name="J. Biol. Chem.">
        <title>Requirement of the Src homology 2 domain protein Shb for T cell receptor-dependent activation of the interleukin-2 gene nuclear factor for activation of T cells element in Jurkat T cells.</title>
        <authorList>
            <person name="Lindholm C.K."/>
            <person name="Gylfe E."/>
            <person name="Zhang W."/>
            <person name="Samelson L.E."/>
            <person name="Welsh M."/>
        </authorList>
    </citation>
    <scope>INTERACTION WITH SHB</scope>
</reference>
<reference key="9">
    <citation type="journal article" date="1999" name="J. Immunol.">
        <title>A role for the adaptor protein LAT in human NK cell-mediated cytotoxicity.</title>
        <authorList>
            <person name="Jevremovic D."/>
            <person name="Billadeau D.D."/>
            <person name="Schoon R.A."/>
            <person name="Dick C.J."/>
            <person name="Irvin B.J."/>
            <person name="Zhang W."/>
            <person name="Samelson L.E."/>
            <person name="Abraham R.T."/>
            <person name="Leibson P.J."/>
        </authorList>
    </citation>
    <scope>FUNCTION IN NK CELLS</scope>
    <scope>INTERACTION WITH PLCG1</scope>
</reference>
<reference key="10">
    <citation type="journal article" date="2000" name="J. Biol. Chem.">
        <title>Association of Grb2, Gads, and phospholipase C-gamma 1 with phosphorylated LAT tyrosine residues. Effect of LAT tyrosine mutations on T cell antigen receptor-mediated signaling.</title>
        <authorList>
            <person name="Zhang W."/>
            <person name="Trible R.P."/>
            <person name="Zhu M."/>
            <person name="Liu S.K."/>
            <person name="McGlade C.J."/>
            <person name="Samelson L.E."/>
        </authorList>
    </citation>
    <scope>INTERACTION WITH GRB2; GRAP2 AND PLCG1</scope>
</reference>
<reference key="11">
    <citation type="journal article" date="2000" name="J. Biol. Chem.">
        <title>The adapter protein LAT enhances fcgamma receptor-mediated signal transduction in myeloid cells.</title>
        <authorList>
            <person name="Tridandapani S."/>
            <person name="Lyden T.W."/>
            <person name="Smith J.L."/>
            <person name="Carter J.E."/>
            <person name="Coggeshall K.M."/>
            <person name="Anderson C.L."/>
        </authorList>
    </citation>
    <scope>INTERACTION WITH FCGR1A</scope>
</reference>
<reference key="12">
    <citation type="journal article" date="2000" name="J. Biol. Chem.">
        <title>Interaction of linker for activation of T cells with multiple adapter proteins in platelets activated by the glycoprotein VI-selective ligand, convulxin.</title>
        <authorList>
            <person name="Asazuma N."/>
            <person name="Wilde J.I."/>
            <person name="Berlanga O."/>
            <person name="Leduc M."/>
            <person name="Leo A."/>
            <person name="Schweighoffer E."/>
            <person name="Tybulewicz V."/>
            <person name="Bon C."/>
            <person name="Liu S.K."/>
            <person name="McGlade C.J."/>
            <person name="Schraven B."/>
            <person name="Watson S.P."/>
        </authorList>
    </citation>
    <scope>PHOSPHORYLATION</scope>
    <scope>INTERACTION WITH LCP2; SKAP2; GRB2; PLCG2 AND CBL</scope>
</reference>
<reference key="13">
    <citation type="journal article" date="2001" name="Biochem. J.">
        <title>Mapping the Zap-70 phosphorylation sites on LAT (linker for activation of T cells) required for recruitment and activation of signalling proteins in T cells.</title>
        <authorList>
            <person name="Paz P.E."/>
            <person name="Wang S."/>
            <person name="Clarke H."/>
            <person name="Lu X."/>
            <person name="Stokoe D."/>
            <person name="Abo A."/>
        </authorList>
    </citation>
    <scope>INTERACTION WITH PIK3R1 AND PLCG1</scope>
    <scope>MUTAGENESIS OF TYR-161</scope>
</reference>
<reference key="14">
    <citation type="journal article" date="2001" name="Mol. Cell. Biol.">
        <title>Protein tyrosine phosphatase CD148-mediated inhibition of T-cell receptor signal transduction is associated with reduced LAT and phospholipase Cgamma1 phosphorylation.</title>
        <authorList>
            <person name="Baker J.E."/>
            <person name="Majeti R."/>
            <person name="Tangye S.G."/>
            <person name="Weiss A."/>
        </authorList>
    </citation>
    <scope>PROBABLE DEPHOSPHORYLATION BY PTPRJ</scope>
</reference>
<reference key="15">
    <citation type="journal article" date="2002" name="Biochemistry">
        <title>Phosphorylation of the linker for activation of T-cells by Itk promotes recruitment of Vav.</title>
        <authorList>
            <person name="Perez-Villar J.J."/>
            <person name="Whitney G.S."/>
            <person name="Sitnick M.T."/>
            <person name="Dunn R.J."/>
            <person name="Venkatesan S."/>
            <person name="O'Day K."/>
            <person name="Schieven G.L."/>
            <person name="Lin T.A."/>
            <person name="Kanner S.B."/>
        </authorList>
    </citation>
    <scope>PHOSPHORYLATION BY ITK</scope>
</reference>
<reference key="16">
    <citation type="journal article" date="2003" name="J. Cell Biol.">
        <title>The tyrosine phosphatase CD148 is excluded from the immunologic synapse and down-regulates prolonged T cell signaling.</title>
        <authorList>
            <person name="Lin J."/>
            <person name="Weiss A."/>
        </authorList>
    </citation>
    <scope>PROBABLE DEPHOSPHORYLATION BY PTPRJ</scope>
</reference>
<reference key="17">
    <citation type="journal article" date="2004" name="Anal. Chem.">
        <title>Robust phosphoproteomic profiling of tyrosine phosphorylation sites from human T cells using immobilized metal affinity chromatography and tandem mass spectrometry.</title>
        <authorList>
            <person name="Brill L.M."/>
            <person name="Salomon A.R."/>
            <person name="Ficarro S.B."/>
            <person name="Mukherji M."/>
            <person name="Stettler-Gill M."/>
            <person name="Peters E.C."/>
        </authorList>
    </citation>
    <scope>IDENTIFICATION BY MASS SPECTROMETRY [LARGE SCALE ANALYSIS]</scope>
    <source>
        <tissue>Leukemic T-cell</tissue>
    </source>
</reference>
<reference key="18">
    <citation type="journal article" date="2004" name="Bioessays">
        <title>LAT: a T lymphocyte adapter protein that couples the antigen receptor to downstream signaling pathways.</title>
        <authorList>
            <person name="Sommers C.L."/>
            <person name="Samelson L.E."/>
            <person name="Love P.E."/>
        </authorList>
    </citation>
    <scope>REVIEW ON FUNCTION IN T-CELLS</scope>
</reference>
<reference key="19">
    <citation type="journal article" date="2006" name="Blood">
        <title>Transmembrane adaptor molecules: a new category of lymphoid-cell markers.</title>
        <authorList>
            <person name="Tedoldi S."/>
            <person name="Paterson J.C."/>
            <person name="Hansmann M.-L."/>
            <person name="Natkunam Y."/>
            <person name="Rudiger T."/>
            <person name="Angelisova P."/>
            <person name="Du M.Q."/>
            <person name="Roberton H."/>
            <person name="Roncador G."/>
            <person name="Sanchez L."/>
            <person name="Pozzobon M."/>
            <person name="Masir N."/>
            <person name="Barry R."/>
            <person name="Pileri S."/>
            <person name="Mason D.Y."/>
            <person name="Marafioti T."/>
            <person name="Horejsi V."/>
        </authorList>
    </citation>
    <scope>TISSUE SPECIFICITY</scope>
</reference>
<reference key="20">
    <citation type="journal article" date="2008" name="J. Proteome Res.">
        <title>Phosphoproteome of resting human platelets.</title>
        <authorList>
            <person name="Zahedi R.P."/>
            <person name="Lewandrowski U."/>
            <person name="Wiesner J."/>
            <person name="Wortelkamp S."/>
            <person name="Moebius J."/>
            <person name="Schuetz C."/>
            <person name="Walter U."/>
            <person name="Gambaryan S."/>
            <person name="Sickmann A."/>
        </authorList>
    </citation>
    <scope>PHOSPHORYLATION [LARGE SCALE ANALYSIS] AT SER-84; SER-101 AND SER-224</scope>
    <scope>IDENTIFICATION BY MASS SPECTROMETRY [LARGE SCALE ANALYSIS]</scope>
    <source>
        <tissue>Platelet</tissue>
    </source>
</reference>
<reference key="21">
    <citation type="journal article" date="2009" name="Sci. Signal.">
        <title>Quantitative phosphoproteomic analysis of T cell receptor signaling reveals system-wide modulation of protein-protein interactions.</title>
        <authorList>
            <person name="Mayya V."/>
            <person name="Lundgren D.H."/>
            <person name="Hwang S.-I."/>
            <person name="Rezaul K."/>
            <person name="Wu L."/>
            <person name="Eng J.K."/>
            <person name="Rodionov V."/>
            <person name="Han D.K."/>
        </authorList>
    </citation>
    <scope>PHOSPHORYLATION [LARGE SCALE ANALYSIS] AT THR-39; SER-40; SER-41; SER-43; SER-101; SER-106; SER-240; SER-241 AND TYR-255</scope>
    <scope>IDENTIFICATION BY MASS SPECTROMETRY [LARGE SCALE ANALYSIS]</scope>
    <source>
        <tissue>Leukemic T-cell</tissue>
    </source>
</reference>
<reference key="22">
    <citation type="journal article" date="2013" name="J. Immunol.">
        <title>TNFR-associated factor 6 regulates TCR signaling via interaction with and modification of LAT adapter.</title>
        <authorList>
            <person name="Xie J.J."/>
            <person name="Liang J.Q."/>
            <person name="Diao L.H."/>
            <person name="Altman A."/>
            <person name="Li Y."/>
        </authorList>
    </citation>
    <scope>FUNCTION</scope>
    <scope>UBIQUITINATION BY TRAF6</scope>
</reference>
<reference key="23">
    <citation type="journal article" date="2014" name="J. Proteomics">
        <title>An enzyme assisted RP-RPLC approach for in-depth analysis of human liver phosphoproteome.</title>
        <authorList>
            <person name="Bian Y."/>
            <person name="Song C."/>
            <person name="Cheng K."/>
            <person name="Dong M."/>
            <person name="Wang F."/>
            <person name="Huang J."/>
            <person name="Sun D."/>
            <person name="Wang L."/>
            <person name="Ye M."/>
            <person name="Zou H."/>
        </authorList>
    </citation>
    <scope>IDENTIFICATION BY MASS SPECTROMETRY [LARGE SCALE ANALYSIS]</scope>
    <source>
        <tissue>Liver</tissue>
    </source>
</reference>
<reference key="24">
    <citation type="journal article" date="2015" name="J. Biol. Chem.">
        <title>The Us3 Protein of Herpes Simplex Virus 1 Inhibits T Cell Signaling by Confining Linker for Activation of T Cells (LAT) Activation via TRAF6 Protein.</title>
        <authorList>
            <person name="Yang Y."/>
            <person name="Wu S."/>
            <person name="Wang Y."/>
            <person name="Pan S."/>
            <person name="Lan B."/>
            <person name="Liu Y."/>
            <person name="Zhang L."/>
            <person name="Leng Q."/>
            <person name="Chen D."/>
            <person name="Zhang C."/>
            <person name="He B."/>
            <person name="Cao Y."/>
        </authorList>
    </citation>
    <scope>FUNCTION</scope>
    <scope>INTERACTION WITH HUMAN HERPESVIRUS 1/HHV-1 (MICROBIAL INFECTION)</scope>
    <scope>UBIQUITINATION BY TRAF6</scope>
</reference>
<reference key="25">
    <citation type="journal article" date="2016" name="J. Exp. Med.">
        <title>Early onset combined immunodeficiency and autoimmunity in patients with loss-of-function mutation in LAT.</title>
        <authorList>
            <person name="Keller B."/>
            <person name="Zaidman I."/>
            <person name="Yousefi O.S."/>
            <person name="Hershkovitz D."/>
            <person name="Stein J."/>
            <person name="Unger S."/>
            <person name="Schachtrup K."/>
            <person name="Sigvardsson M."/>
            <person name="Kuperman A.A."/>
            <person name="Shaag A."/>
            <person name="Schamel W.W."/>
            <person name="Elpeleg O."/>
            <person name="Warnatz K."/>
            <person name="Stepensky P."/>
        </authorList>
    </citation>
    <scope>INVOLVEMENT IN IMD52</scope>
</reference>
<reference key="26">
    <citation type="journal article" date="2017" name="J. Allergy Clin. Immunol.">
        <title>Mutations in linker for activation of T cells (LAT) lead to a novel form of severe combined immunodeficiency.</title>
        <authorList>
            <person name="Bacchelli C."/>
            <person name="Moretti F.A."/>
            <person name="Carmo M."/>
            <person name="Adams S."/>
            <person name="Stanescu H.C."/>
            <person name="Pearce K."/>
            <person name="Madkaikar M."/>
            <person name="Gilmour K.C."/>
            <person name="Nicholas A.K."/>
            <person name="Woods C.G."/>
            <person name="Kleta R."/>
            <person name="Beales P.L."/>
            <person name="Qasim W."/>
            <person name="Gaspar H.B."/>
        </authorList>
    </citation>
    <scope>INVOLVEMENT IN IMD52</scope>
</reference>
<dbReference type="EMBL" id="AF036906">
    <property type="protein sequence ID" value="AAC39637.1"/>
    <property type="molecule type" value="mRNA"/>
</dbReference>
<dbReference type="EMBL" id="AF036905">
    <property type="protein sequence ID" value="AAC39636.1"/>
    <property type="molecule type" value="mRNA"/>
</dbReference>
<dbReference type="EMBL" id="AJ223280">
    <property type="protein sequence ID" value="CAA11218.1"/>
    <property type="molecule type" value="mRNA"/>
</dbReference>
<dbReference type="EMBL" id="FN432832">
    <property type="protein sequence ID" value="CBA11533.1"/>
    <property type="molecule type" value="mRNA"/>
</dbReference>
<dbReference type="EMBL" id="AC109460">
    <property type="status" value="NOT_ANNOTATED_CDS"/>
    <property type="molecule type" value="Genomic_DNA"/>
</dbReference>
<dbReference type="EMBL" id="CH471267">
    <property type="protein sequence ID" value="EAW52027.1"/>
    <property type="molecule type" value="Genomic_DNA"/>
</dbReference>
<dbReference type="EMBL" id="CH471267">
    <property type="protein sequence ID" value="EAW52028.1"/>
    <property type="molecule type" value="Genomic_DNA"/>
</dbReference>
<dbReference type="EMBL" id="BC011563">
    <property type="protein sequence ID" value="AAH11563.1"/>
    <property type="molecule type" value="mRNA"/>
</dbReference>
<dbReference type="CCDS" id="CCDS10647.1">
    <molecule id="O43561-1"/>
</dbReference>
<dbReference type="CCDS" id="CCDS32425.1">
    <molecule id="O43561-2"/>
</dbReference>
<dbReference type="CCDS" id="CCDS45455.1">
    <molecule id="O43561-4"/>
</dbReference>
<dbReference type="CCDS" id="CCDS53999.1">
    <molecule id="O43561-3"/>
</dbReference>
<dbReference type="RefSeq" id="NP_001014987.1">
    <molecule id="O43561-2"/>
    <property type="nucleotide sequence ID" value="NM_001014987.2"/>
</dbReference>
<dbReference type="RefSeq" id="NP_001014988.1">
    <molecule id="O43561-4"/>
    <property type="nucleotide sequence ID" value="NM_001014988.2"/>
</dbReference>
<dbReference type="RefSeq" id="NP_001014989.2">
    <molecule id="O43561-3"/>
    <property type="nucleotide sequence ID" value="NM_001014989.2"/>
</dbReference>
<dbReference type="RefSeq" id="NP_055202.1">
    <molecule id="O43561-1"/>
    <property type="nucleotide sequence ID" value="NM_014387.4"/>
</dbReference>
<dbReference type="BioGRID" id="117971">
    <property type="interactions" value="114"/>
</dbReference>
<dbReference type="CORUM" id="O43561"/>
<dbReference type="DIP" id="DIP-29231N"/>
<dbReference type="FunCoup" id="O43561">
    <property type="interactions" value="642"/>
</dbReference>
<dbReference type="IntAct" id="O43561">
    <property type="interactions" value="85"/>
</dbReference>
<dbReference type="MINT" id="O43561"/>
<dbReference type="STRING" id="9606.ENSP00000378845"/>
<dbReference type="ChEMBL" id="CHEMBL5779"/>
<dbReference type="GlyCosmos" id="O43561">
    <property type="glycosylation" value="2 sites, 2 glycans"/>
</dbReference>
<dbReference type="GlyGen" id="O43561">
    <property type="glycosylation" value="4 sites, 2 O-linked glycans (3 sites)"/>
</dbReference>
<dbReference type="iPTMnet" id="O43561"/>
<dbReference type="PhosphoSitePlus" id="O43561"/>
<dbReference type="SwissPalm" id="O43561"/>
<dbReference type="BioMuta" id="LAT"/>
<dbReference type="CPTAC" id="CPTAC-5889"/>
<dbReference type="jPOST" id="O43561"/>
<dbReference type="MassIVE" id="O43561"/>
<dbReference type="PeptideAtlas" id="O43561"/>
<dbReference type="ProteomicsDB" id="33964"/>
<dbReference type="ProteomicsDB" id="49052">
    <molecule id="O43561-1"/>
</dbReference>
<dbReference type="ProteomicsDB" id="49053">
    <molecule id="O43561-2"/>
</dbReference>
<dbReference type="ProteomicsDB" id="6302"/>
<dbReference type="ProteomicsDB" id="7609"/>
<dbReference type="Antibodypedia" id="2621">
    <property type="antibodies" value="1015 antibodies from 47 providers"/>
</dbReference>
<dbReference type="CPTC" id="O43561">
    <property type="antibodies" value="1 antibody"/>
</dbReference>
<dbReference type="DNASU" id="27040"/>
<dbReference type="Ensembl" id="ENST00000360872.9">
    <molecule id="O43561-1"/>
    <property type="protein sequence ID" value="ENSP00000354119.5"/>
    <property type="gene ID" value="ENSG00000213658.13"/>
</dbReference>
<dbReference type="Ensembl" id="ENST00000395456.7">
    <molecule id="O43561-2"/>
    <property type="protein sequence ID" value="ENSP00000378841.3"/>
    <property type="gene ID" value="ENSG00000213658.13"/>
</dbReference>
<dbReference type="Ensembl" id="ENST00000395461.7">
    <molecule id="O43561-3"/>
    <property type="protein sequence ID" value="ENSP00000378845.3"/>
    <property type="gene ID" value="ENSG00000213658.13"/>
</dbReference>
<dbReference type="Ensembl" id="ENST00000454369.6">
    <molecule id="O43561-4"/>
    <property type="protein sequence ID" value="ENSP00000398793.2"/>
    <property type="gene ID" value="ENSG00000213658.13"/>
</dbReference>
<dbReference type="Ensembl" id="ENST00000564277.5">
    <molecule id="O43561-4"/>
    <property type="protein sequence ID" value="ENSP00000457036.1"/>
    <property type="gene ID" value="ENSG00000213658.13"/>
</dbReference>
<dbReference type="Ensembl" id="ENST00000566177.5">
    <molecule id="O43561-5"/>
    <property type="protein sequence ID" value="ENSP00000456761.1"/>
    <property type="gene ID" value="ENSG00000213658.13"/>
</dbReference>
<dbReference type="GeneID" id="27040"/>
<dbReference type="KEGG" id="hsa:27040"/>
<dbReference type="MANE-Select" id="ENST00000395456.7">
    <molecule id="O43561-2"/>
    <property type="protein sequence ID" value="ENSP00000378841.3"/>
    <property type="RefSeq nucleotide sequence ID" value="NM_001014987.2"/>
    <property type="RefSeq protein sequence ID" value="NP_001014987.1"/>
</dbReference>
<dbReference type="UCSC" id="uc002dsb.4">
    <molecule id="O43561-1"/>
    <property type="organism name" value="human"/>
</dbReference>
<dbReference type="AGR" id="HGNC:18874"/>
<dbReference type="CTD" id="27040"/>
<dbReference type="DisGeNET" id="27040"/>
<dbReference type="GeneCards" id="LAT"/>
<dbReference type="HGNC" id="HGNC:18874">
    <property type="gene designation" value="LAT"/>
</dbReference>
<dbReference type="HPA" id="ENSG00000213658">
    <property type="expression patterns" value="Tissue enhanced (lymphoid)"/>
</dbReference>
<dbReference type="MalaCards" id="LAT"/>
<dbReference type="MIM" id="602354">
    <property type="type" value="gene"/>
</dbReference>
<dbReference type="MIM" id="617514">
    <property type="type" value="phenotype"/>
</dbReference>
<dbReference type="neXtProt" id="NX_O43561"/>
<dbReference type="OpenTargets" id="ENSG00000213658"/>
<dbReference type="Orphanet" id="504523">
    <property type="disease" value="Severe combined immunodeficiency due to LAT deficiency"/>
</dbReference>
<dbReference type="PharmGKB" id="PA38728"/>
<dbReference type="VEuPathDB" id="HostDB:ENSG00000213658"/>
<dbReference type="GeneTree" id="ENSGT00390000014223"/>
<dbReference type="HOGENOM" id="CLU_093883_0_0_1"/>
<dbReference type="InParanoid" id="O43561"/>
<dbReference type="OrthoDB" id="9451490at2759"/>
<dbReference type="PAN-GO" id="O43561">
    <property type="GO annotations" value="7 GO annotations based on evolutionary models"/>
</dbReference>
<dbReference type="PhylomeDB" id="O43561"/>
<dbReference type="TreeFam" id="TF337741"/>
<dbReference type="PathwayCommons" id="O43561"/>
<dbReference type="Reactome" id="R-HSA-114604">
    <property type="pathway name" value="GPVI-mediated activation cascade"/>
</dbReference>
<dbReference type="Reactome" id="R-HSA-202433">
    <property type="pathway name" value="Generation of second messenger molecules"/>
</dbReference>
<dbReference type="Reactome" id="R-HSA-2424491">
    <molecule id="O43561-2"/>
    <property type="pathway name" value="DAP12 signaling"/>
</dbReference>
<dbReference type="Reactome" id="R-HSA-2454202">
    <molecule id="O43561-2"/>
    <property type="pathway name" value="Fc epsilon receptor (FCERI) signaling"/>
</dbReference>
<dbReference type="Reactome" id="R-HSA-2871796">
    <molecule id="O43561-2"/>
    <property type="pathway name" value="FCERI mediated MAPK activation"/>
</dbReference>
<dbReference type="Reactome" id="R-HSA-2871809">
    <molecule id="O43561-2"/>
    <property type="pathway name" value="FCERI mediated Ca+2 mobilization"/>
</dbReference>
<dbReference type="Reactome" id="R-HSA-5673001">
    <molecule id="O43561-2"/>
    <property type="pathway name" value="RAF/MAP kinase cascade"/>
</dbReference>
<dbReference type="SignaLink" id="O43561"/>
<dbReference type="SIGNOR" id="O43561"/>
<dbReference type="BioGRID-ORCS" id="27040">
    <property type="hits" value="25 hits in 1167 CRISPR screens"/>
</dbReference>
<dbReference type="CD-CODE" id="36896B46">
    <property type="entry name" value="T-cell signalosome"/>
</dbReference>
<dbReference type="CD-CODE" id="F345034F">
    <property type="entry name" value="Signaling cluster"/>
</dbReference>
<dbReference type="ChiTaRS" id="LAT">
    <property type="organism name" value="human"/>
</dbReference>
<dbReference type="GeneWiki" id="Linker_of_activated_T_cells"/>
<dbReference type="GenomeRNAi" id="27040"/>
<dbReference type="Pharos" id="O43561">
    <property type="development level" value="Tbio"/>
</dbReference>
<dbReference type="PRO" id="PR:O43561"/>
<dbReference type="Proteomes" id="UP000005640">
    <property type="component" value="Chromosome 16"/>
</dbReference>
<dbReference type="RNAct" id="O43561">
    <property type="molecule type" value="protein"/>
</dbReference>
<dbReference type="Bgee" id="ENSG00000213658">
    <property type="expression patterns" value="Expressed in granulocyte and 95 other cell types or tissues"/>
</dbReference>
<dbReference type="ExpressionAtlas" id="O43561">
    <property type="expression patterns" value="baseline and differential"/>
</dbReference>
<dbReference type="GO" id="GO:0005911">
    <property type="term" value="C:cell-cell junction"/>
    <property type="evidence" value="ECO:0007669"/>
    <property type="project" value="Ensembl"/>
</dbReference>
<dbReference type="GO" id="GO:0008180">
    <property type="term" value="C:COP9 signalosome"/>
    <property type="evidence" value="ECO:0000250"/>
    <property type="project" value="UniProtKB"/>
</dbReference>
<dbReference type="GO" id="GO:0005794">
    <property type="term" value="C:Golgi apparatus"/>
    <property type="evidence" value="ECO:0000314"/>
    <property type="project" value="HPA"/>
</dbReference>
<dbReference type="GO" id="GO:0001772">
    <property type="term" value="C:immunological synapse"/>
    <property type="evidence" value="ECO:0000314"/>
    <property type="project" value="HGNC-UCL"/>
</dbReference>
<dbReference type="GO" id="GO:0016020">
    <property type="term" value="C:membrane"/>
    <property type="evidence" value="ECO:0000314"/>
    <property type="project" value="HGNC-UCL"/>
</dbReference>
<dbReference type="GO" id="GO:0045121">
    <property type="term" value="C:membrane raft"/>
    <property type="evidence" value="ECO:0000304"/>
    <property type="project" value="ARUK-UCL"/>
</dbReference>
<dbReference type="GO" id="GO:0005886">
    <property type="term" value="C:plasma membrane"/>
    <property type="evidence" value="ECO:0000314"/>
    <property type="project" value="HPA"/>
</dbReference>
<dbReference type="GO" id="GO:0036398">
    <property type="term" value="C:TCR signalosome"/>
    <property type="evidence" value="ECO:0000314"/>
    <property type="project" value="DisProt"/>
</dbReference>
<dbReference type="GO" id="GO:0140693">
    <property type="term" value="F:molecular condensate scaffold activity"/>
    <property type="evidence" value="ECO:0000314"/>
    <property type="project" value="DisProt"/>
</dbReference>
<dbReference type="GO" id="GO:0019901">
    <property type="term" value="F:protein kinase binding"/>
    <property type="evidence" value="ECO:0000353"/>
    <property type="project" value="UniProtKB"/>
</dbReference>
<dbReference type="GO" id="GO:0035591">
    <property type="term" value="F:signaling adaptor activity"/>
    <property type="evidence" value="ECO:0000314"/>
    <property type="project" value="UniProt"/>
</dbReference>
<dbReference type="GO" id="GO:0030159">
    <property type="term" value="F:signaling receptor complex adaptor activity"/>
    <property type="evidence" value="ECO:0000314"/>
    <property type="project" value="HGNC-UCL"/>
</dbReference>
<dbReference type="GO" id="GO:0002250">
    <property type="term" value="P:adaptive immune response"/>
    <property type="evidence" value="ECO:0007669"/>
    <property type="project" value="UniProtKB-KW"/>
</dbReference>
<dbReference type="GO" id="GO:0019722">
    <property type="term" value="P:calcium-mediated signaling"/>
    <property type="evidence" value="ECO:0000315"/>
    <property type="project" value="HGNC-UCL"/>
</dbReference>
<dbReference type="GO" id="GO:0010467">
    <property type="term" value="P:gene expression"/>
    <property type="evidence" value="ECO:0007669"/>
    <property type="project" value="Ensembl"/>
</dbReference>
<dbReference type="GO" id="GO:0006955">
    <property type="term" value="P:immune response"/>
    <property type="evidence" value="ECO:0000314"/>
    <property type="project" value="HGNC-UCL"/>
</dbReference>
<dbReference type="GO" id="GO:0006954">
    <property type="term" value="P:inflammatory response"/>
    <property type="evidence" value="ECO:0000318"/>
    <property type="project" value="GO_Central"/>
</dbReference>
<dbReference type="GO" id="GO:0007229">
    <property type="term" value="P:integrin-mediated signaling pathway"/>
    <property type="evidence" value="ECO:0000314"/>
    <property type="project" value="HGNC-UCL"/>
</dbReference>
<dbReference type="GO" id="GO:0035556">
    <property type="term" value="P:intracellular signal transduction"/>
    <property type="evidence" value="ECO:0000314"/>
    <property type="project" value="HGNC-UCL"/>
</dbReference>
<dbReference type="GO" id="GO:0002260">
    <property type="term" value="P:lymphocyte homeostasis"/>
    <property type="evidence" value="ECO:0007669"/>
    <property type="project" value="Ensembl"/>
</dbReference>
<dbReference type="GO" id="GO:0043303">
    <property type="term" value="P:mast cell degranulation"/>
    <property type="evidence" value="ECO:0007669"/>
    <property type="project" value="UniProtKB-KW"/>
</dbReference>
<dbReference type="GO" id="GO:0031580">
    <property type="term" value="P:membrane raft distribution"/>
    <property type="evidence" value="ECO:0000314"/>
    <property type="project" value="DisProt"/>
</dbReference>
<dbReference type="GO" id="GO:0043410">
    <property type="term" value="P:positive regulation of MAPK cascade"/>
    <property type="evidence" value="ECO:0000314"/>
    <property type="project" value="UniProt"/>
</dbReference>
<dbReference type="GO" id="GO:0045860">
    <property type="term" value="P:positive regulation of protein kinase activity"/>
    <property type="evidence" value="ECO:0000270"/>
    <property type="project" value="CACAO"/>
</dbReference>
<dbReference type="GO" id="GO:0007265">
    <property type="term" value="P:Ras protein signal transduction"/>
    <property type="evidence" value="ECO:0000315"/>
    <property type="project" value="HGNC-UCL"/>
</dbReference>
<dbReference type="GO" id="GO:0050863">
    <property type="term" value="P:regulation of T cell activation"/>
    <property type="evidence" value="ECO:0000315"/>
    <property type="project" value="HGNC-UCL"/>
</dbReference>
<dbReference type="GO" id="GO:0042110">
    <property type="term" value="P:T cell activation"/>
    <property type="evidence" value="ECO:0000304"/>
    <property type="project" value="UniProtKB"/>
</dbReference>
<dbReference type="GO" id="GO:0050852">
    <property type="term" value="P:T cell receptor signaling pathway"/>
    <property type="evidence" value="ECO:0000314"/>
    <property type="project" value="UniProt"/>
</dbReference>
<dbReference type="InterPro" id="IPR008359">
    <property type="entry name" value="Linker_for_activat_Tcells_prot"/>
</dbReference>
<dbReference type="PANTHER" id="PTHR15586">
    <property type="entry name" value="LINKER FOR ACTIVATION OF T-CELLS FAMILY MEMBER 1"/>
    <property type="match status" value="1"/>
</dbReference>
<dbReference type="PANTHER" id="PTHR15586:SF0">
    <property type="entry name" value="LINKER FOR ACTIVATION OF T-CELLS FAMILY MEMBER 1"/>
    <property type="match status" value="1"/>
</dbReference>
<dbReference type="Pfam" id="PF15234">
    <property type="entry name" value="LAT"/>
    <property type="match status" value="1"/>
</dbReference>
<dbReference type="PRINTS" id="PR01781">
    <property type="entry name" value="LATPROTEIN"/>
</dbReference>
<name>LAT_HUMAN</name>
<feature type="chain" id="PRO_0000083325" description="Linker for activation of T-cells family member 1">
    <location>
        <begin position="1"/>
        <end position="262"/>
    </location>
</feature>
<feature type="topological domain" description="Extracellular" evidence="3">
    <location>
        <begin position="1"/>
        <end position="4"/>
    </location>
</feature>
<feature type="transmembrane region" description="Helical; Signal-anchor for type III membrane protein" evidence="3">
    <location>
        <begin position="5"/>
        <end position="27"/>
    </location>
</feature>
<feature type="topological domain" description="Cytoplasmic" evidence="3">
    <location>
        <begin position="28"/>
        <end position="262"/>
    </location>
</feature>
<feature type="region of interest" description="Disordered" evidence="4">
    <location>
        <begin position="69"/>
        <end position="115"/>
    </location>
</feature>
<feature type="region of interest" description="Interaction with PLCG1">
    <location>
        <begin position="161"/>
        <end position="164"/>
    </location>
</feature>
<feature type="region of interest" description="Interaction with GRB2, GRAP2 and PIK3R1" evidence="6">
    <location>
        <begin position="200"/>
        <end position="203"/>
    </location>
</feature>
<feature type="region of interest" description="Disordered" evidence="4">
    <location>
        <begin position="206"/>
        <end position="262"/>
    </location>
</feature>
<feature type="region of interest" description="Interaction with GRB2, GRAP2 and PIK3R1" evidence="6">
    <location>
        <begin position="220"/>
        <end position="223"/>
    </location>
</feature>
<feature type="compositionally biased region" description="Acidic residues" evidence="4">
    <location>
        <begin position="243"/>
        <end position="253"/>
    </location>
</feature>
<feature type="modified residue" description="Phosphothreonine" evidence="21">
    <location>
        <position position="39"/>
    </location>
</feature>
<feature type="modified residue" description="Phosphoserine" evidence="21">
    <location>
        <position position="40"/>
    </location>
</feature>
<feature type="modified residue" description="Phosphoserine" evidence="21">
    <location>
        <position position="41"/>
    </location>
</feature>
<feature type="modified residue" description="Phosphoserine" evidence="21">
    <location>
        <position position="43"/>
    </location>
</feature>
<feature type="modified residue" description="Phosphoserine" evidence="20">
    <location>
        <position position="84"/>
    </location>
</feature>
<feature type="modified residue" description="Phosphoserine" evidence="20 21">
    <location>
        <position position="101"/>
    </location>
</feature>
<feature type="modified residue" description="Phosphoserine" evidence="21">
    <location>
        <position position="106"/>
    </location>
</feature>
<feature type="modified residue" description="Phosphoserine" evidence="2">
    <location>
        <position position="109"/>
    </location>
</feature>
<feature type="modified residue" description="Phosphotyrosine" evidence="19">
    <location>
        <position position="110"/>
    </location>
</feature>
<feature type="modified residue" description="Phosphotyrosine" evidence="19">
    <location>
        <position position="156"/>
    </location>
</feature>
<feature type="modified residue" description="Phosphotyrosine" evidence="19">
    <location>
        <position position="161"/>
    </location>
</feature>
<feature type="modified residue" description="Phosphotyrosine" evidence="13">
    <location>
        <position position="200"/>
    </location>
</feature>
<feature type="modified residue" description="Phosphotyrosine" evidence="19">
    <location>
        <position position="220"/>
    </location>
</feature>
<feature type="modified residue" description="Phosphoserine" evidence="20">
    <location>
        <position position="224"/>
    </location>
</feature>
<feature type="modified residue" description="Phosphoserine" evidence="21">
    <location>
        <position position="240"/>
    </location>
</feature>
<feature type="modified residue" description="Phosphoserine" evidence="21">
    <location>
        <position position="241"/>
    </location>
</feature>
<feature type="modified residue" description="Phosphotyrosine" evidence="21">
    <location>
        <position position="255"/>
    </location>
</feature>
<feature type="lipid moiety-binding region" description="S-palmitoyl cysteine" evidence="14">
    <location>
        <position position="26"/>
    </location>
</feature>
<feature type="lipid moiety-binding region" description="S-palmitoyl cysteine" evidence="14">
    <location>
        <position position="29"/>
    </location>
</feature>
<feature type="splice variant" id="VSP_054758" description="In isoform 3." evidence="19">
    <original>M</original>
    <variation>MEATAASWQVAVPVLGGASRPLGPRGAASLLRAPLQM</variation>
    <location>
        <position position="1"/>
    </location>
</feature>
<feature type="splice variant" id="VSP_054759" description="In isoform 4 and isoform 5." evidence="18">
    <location>
        <position position="83"/>
    </location>
</feature>
<feature type="splice variant" id="VSP_004303" description="In isoform 2, isoform 3 and isoform 4." evidence="15 16 17">
    <location>
        <begin position="114"/>
        <end position="142"/>
    </location>
</feature>
<feature type="mutagenesis site" description="Reduces palmitoylation; abolishes localization to lipid rafts." evidence="14">
    <original>C</original>
    <variation>A</variation>
    <location>
        <position position="26"/>
    </location>
</feature>
<feature type="mutagenesis site" description="Reduces palmitoylation; impairs localization to lipid rafts." evidence="14">
    <original>C</original>
    <variation>A</variation>
    <location>
        <position position="29"/>
    </location>
</feature>
<feature type="mutagenesis site" description="Abolishes interaction with PLCG1." evidence="7">
    <original>Y</original>
    <variation>F</variation>
    <location>
        <position position="161"/>
    </location>
</feature>
<feature type="mutagenesis site" description="Abolishes interaction with GRB2 and PIK3R1; when associated with F-220." evidence="13">
    <original>Y</original>
    <variation>F</variation>
    <location>
        <position position="200"/>
    </location>
</feature>
<feature type="mutagenesis site" description="Abolishes interaction with GRB2 and PIK3R1; when associated with F-200." evidence="13">
    <original>Y</original>
    <variation>F</variation>
    <location>
        <position position="220"/>
    </location>
</feature>